<proteinExistence type="evidence at protein level"/>
<comment type="sequence caution" evidence="3">
    <conflict type="miscellaneous discrepancy">
        <sequence resource="EMBL-CDS" id="AAA58204"/>
    </conflict>
    <text>Wrong choice of frame.</text>
</comment>
<comment type="sequence caution" evidence="3">
    <conflict type="erroneous initiation">
        <sequence resource="EMBL-CDS" id="AAA58205"/>
    </conflict>
    <text>Truncated N-terminus.</text>
</comment>
<comment type="sequence caution" evidence="3">
    <conflict type="frameshift">
        <sequence resource="EMBL-CDS" id="AAA58205"/>
    </conflict>
</comment>
<sequence length="773" mass="85120">MMNDSFCRIIAGEIQARPEQVDAAVRLLDEGNTVPFIARYRKEITGGLDDTQLRNLETRLSYLRELEERRQAILKSISEQGKLTDDLAKAINATLSKTELEDLYLPYKPKRRTRGQIAIEAGLEPLADLLWSDPSHTPEVAAAQYVYADKGVADTKAALDGARYILMERFAEDAALLAKVRDYLWKNAHLVSTVVSGKEEEGAKFRDYFDHHEPLSTVPSHRALAMFRGRNEGVLQLSLNADPQFDEPPKESYCEQIIMDHLGLRLNNAPADSWRKGVVSWTWRIKVLMHLETELMGTVRERAEDEAINVFARNLHDLLMAAPAGLRATMGLDPGLRTGVKVAVVDATGKLVATDTIYPHTGQAAKAAMTVAALCEKHNVELVAIGNGTASRETERFYLDVQKQFPKVTAQKVIVSEAGASVYSASELAAQEFPDLDVSLRGAVSIARRLQDPLAELVKIDPKSIGVGQYQHDVSQTQLARKLDAVVEDCVNAVGVDLNTASVPLLTRVAGLTRMMAQNIVAWRDENGQFQNRQQLLKVSRLGPKAFEQCAGFLRINHGDNPLDASTVHPEAYPVVERILAATQQALKDLMGNSSELRNLKASDFTDEKFGVPTVTDIIKELEKPGRDPRPEFKTAQFADGVETMNDLQPGMILEGAVTNVTNFGAFVDIGVHQDGLVHISSLSNKFVEDPHTVVKAGDIVKVKVLEVDLQRKRIALTMRLDEQPGETNARRGGGNERPQNNRPAAKPRGREAQPAGNSAMMDALAAAMGKKR</sequence>
<reference key="1">
    <citation type="journal article" date="1997" name="Science">
        <title>The complete genome sequence of Escherichia coli K-12.</title>
        <authorList>
            <person name="Blattner F.R."/>
            <person name="Plunkett G. III"/>
            <person name="Bloch C.A."/>
            <person name="Perna N.T."/>
            <person name="Burland V."/>
            <person name="Riley M."/>
            <person name="Collado-Vides J."/>
            <person name="Glasner J.D."/>
            <person name="Rode C.K."/>
            <person name="Mayhew G.F."/>
            <person name="Gregor J."/>
            <person name="Davis N.W."/>
            <person name="Kirkpatrick H.A."/>
            <person name="Goeden M.A."/>
            <person name="Rose D.J."/>
            <person name="Mau B."/>
            <person name="Shao Y."/>
        </authorList>
    </citation>
    <scope>NUCLEOTIDE SEQUENCE [LARGE SCALE GENOMIC DNA]</scope>
    <source>
        <strain>K12 / MG1655 / ATCC 47076</strain>
    </source>
</reference>
<reference key="2">
    <citation type="journal article" date="2006" name="Mol. Syst. Biol.">
        <title>Highly accurate genome sequences of Escherichia coli K-12 strains MG1655 and W3110.</title>
        <authorList>
            <person name="Hayashi K."/>
            <person name="Morooka N."/>
            <person name="Yamamoto Y."/>
            <person name="Fujita K."/>
            <person name="Isono K."/>
            <person name="Choi S."/>
            <person name="Ohtsubo E."/>
            <person name="Baba T."/>
            <person name="Wanner B.L."/>
            <person name="Mori H."/>
            <person name="Horiuchi T."/>
        </authorList>
    </citation>
    <scope>NUCLEOTIDE SEQUENCE [LARGE SCALE GENOMIC DNA]</scope>
    <source>
        <strain>K12 / W3110 / ATCC 27325 / DSM 5911</strain>
    </source>
</reference>
<reference key="3">
    <citation type="journal article" date="1999" name="Electrophoresis">
        <title>Enrichment of low abundance proteins of Escherichia coli by hydroxyapatite chromatography.</title>
        <authorList>
            <person name="Fountoulakis M."/>
            <person name="Takacs M.-F."/>
            <person name="Berndt P."/>
            <person name="Langen H."/>
            <person name="Takacs B."/>
        </authorList>
    </citation>
    <scope>IDENTIFICATION BY MASS SPECTROMETRY</scope>
    <source>
        <strain>B / BL21</strain>
    </source>
</reference>
<feature type="chain" id="PRO_0000215104" description="Protein YhgF">
    <location>
        <begin position="1"/>
        <end position="773"/>
    </location>
</feature>
<feature type="domain" description="S1 motif" evidence="1">
    <location>
        <begin position="651"/>
        <end position="720"/>
    </location>
</feature>
<feature type="region of interest" description="Disordered" evidence="2">
    <location>
        <begin position="721"/>
        <end position="773"/>
    </location>
</feature>
<feature type="sequence conflict" description="In Ref. 1; AAA58205." evidence="3" ref="1">
    <original>QP</original>
    <variation>HA</variation>
    <location>
        <begin position="754"/>
        <end position="755"/>
    </location>
</feature>
<keyword id="KW-1185">Reference proteome</keyword>
<keyword id="KW-0694">RNA-binding</keyword>
<protein>
    <recommendedName>
        <fullName>Protein YhgF</fullName>
    </recommendedName>
</protein>
<name>YHGF_ECOLI</name>
<evidence type="ECO:0000255" key="1">
    <source>
        <dbReference type="PROSITE-ProRule" id="PRU00180"/>
    </source>
</evidence>
<evidence type="ECO:0000256" key="2">
    <source>
        <dbReference type="SAM" id="MobiDB-lite"/>
    </source>
</evidence>
<evidence type="ECO:0000305" key="3"/>
<accession>P46837</accession>
<accession>P76689</accession>
<accession>Q2M772</accession>
<organism>
    <name type="scientific">Escherichia coli (strain K12)</name>
    <dbReference type="NCBI Taxonomy" id="83333"/>
    <lineage>
        <taxon>Bacteria</taxon>
        <taxon>Pseudomonadati</taxon>
        <taxon>Pseudomonadota</taxon>
        <taxon>Gammaproteobacteria</taxon>
        <taxon>Enterobacterales</taxon>
        <taxon>Enterobacteriaceae</taxon>
        <taxon>Escherichia</taxon>
    </lineage>
</organism>
<gene>
    <name type="primary">yhgF</name>
    <name type="ordered locus">b3407</name>
    <name type="ordered locus">JW3370</name>
</gene>
<dbReference type="EMBL" id="U18997">
    <property type="protein sequence ID" value="AAA58204.1"/>
    <property type="status" value="ALT_SEQ"/>
    <property type="molecule type" value="Genomic_DNA"/>
</dbReference>
<dbReference type="EMBL" id="U18997">
    <property type="protein sequence ID" value="AAA58205.1"/>
    <property type="status" value="ALT_SEQ"/>
    <property type="molecule type" value="Genomic_DNA"/>
</dbReference>
<dbReference type="EMBL" id="U00096">
    <property type="protein sequence ID" value="AAC76432.2"/>
    <property type="molecule type" value="Genomic_DNA"/>
</dbReference>
<dbReference type="EMBL" id="AP009048">
    <property type="protein sequence ID" value="BAE77884.1"/>
    <property type="molecule type" value="Genomic_DNA"/>
</dbReference>
<dbReference type="PIR" id="B65136">
    <property type="entry name" value="B65136"/>
</dbReference>
<dbReference type="RefSeq" id="NP_417866.4">
    <property type="nucleotide sequence ID" value="NC_000913.3"/>
</dbReference>
<dbReference type="RefSeq" id="WP_000980727.1">
    <property type="nucleotide sequence ID" value="NZ_LN832404.1"/>
</dbReference>
<dbReference type="SMR" id="P46837"/>
<dbReference type="BioGRID" id="4261725">
    <property type="interactions" value="63"/>
</dbReference>
<dbReference type="BioGRID" id="852220">
    <property type="interactions" value="1"/>
</dbReference>
<dbReference type="DIP" id="DIP-12337N"/>
<dbReference type="FunCoup" id="P46837">
    <property type="interactions" value="659"/>
</dbReference>
<dbReference type="IntAct" id="P46837">
    <property type="interactions" value="10"/>
</dbReference>
<dbReference type="STRING" id="511145.b3407"/>
<dbReference type="jPOST" id="P46837"/>
<dbReference type="PaxDb" id="511145-b3407"/>
<dbReference type="EnsemblBacteria" id="AAC76432">
    <property type="protein sequence ID" value="AAC76432"/>
    <property type="gene ID" value="b3407"/>
</dbReference>
<dbReference type="GeneID" id="947911"/>
<dbReference type="KEGG" id="ecj:JW3370"/>
<dbReference type="KEGG" id="eco:b3407"/>
<dbReference type="KEGG" id="ecoc:C3026_18485"/>
<dbReference type="PATRIC" id="fig|1411691.4.peg.3322"/>
<dbReference type="EchoBASE" id="EB2768"/>
<dbReference type="eggNOG" id="COG2183">
    <property type="taxonomic scope" value="Bacteria"/>
</dbReference>
<dbReference type="HOGENOM" id="CLU_009833_0_2_6"/>
<dbReference type="InParanoid" id="P46837"/>
<dbReference type="OMA" id="RWAWRTR"/>
<dbReference type="OrthoDB" id="9804714at2"/>
<dbReference type="PhylomeDB" id="P46837"/>
<dbReference type="BioCyc" id="EcoCyc:G7746-MONOMER"/>
<dbReference type="PRO" id="PR:P46837"/>
<dbReference type="Proteomes" id="UP000000625">
    <property type="component" value="Chromosome"/>
</dbReference>
<dbReference type="GO" id="GO:0005829">
    <property type="term" value="C:cytosol"/>
    <property type="evidence" value="ECO:0000314"/>
    <property type="project" value="EcoCyc"/>
</dbReference>
<dbReference type="GO" id="GO:0003729">
    <property type="term" value="F:mRNA binding"/>
    <property type="evidence" value="ECO:0000269"/>
    <property type="project" value="EcoCyc"/>
</dbReference>
<dbReference type="GO" id="GO:0003723">
    <property type="term" value="F:RNA binding"/>
    <property type="evidence" value="ECO:0000269"/>
    <property type="project" value="EcoCyc"/>
</dbReference>
<dbReference type="GO" id="GO:0003735">
    <property type="term" value="F:structural constituent of ribosome"/>
    <property type="evidence" value="ECO:0000318"/>
    <property type="project" value="GO_Central"/>
</dbReference>
<dbReference type="GO" id="GO:0000049">
    <property type="term" value="F:tRNA binding"/>
    <property type="evidence" value="ECO:0000269"/>
    <property type="project" value="EcoCyc"/>
</dbReference>
<dbReference type="GO" id="GO:0006139">
    <property type="term" value="P:nucleobase-containing compound metabolic process"/>
    <property type="evidence" value="ECO:0007669"/>
    <property type="project" value="InterPro"/>
</dbReference>
<dbReference type="GO" id="GO:0010212">
    <property type="term" value="P:response to ionizing radiation"/>
    <property type="evidence" value="ECO:0000315"/>
    <property type="project" value="EcoCyc"/>
</dbReference>
<dbReference type="GO" id="GO:0006412">
    <property type="term" value="P:translation"/>
    <property type="evidence" value="ECO:0000318"/>
    <property type="project" value="GO_Central"/>
</dbReference>
<dbReference type="CDD" id="cd05685">
    <property type="entry name" value="S1_Tex"/>
    <property type="match status" value="1"/>
</dbReference>
<dbReference type="FunFam" id="1.10.150.310:FF:000001">
    <property type="entry name" value="RNA-binding transcriptional accessory protein"/>
    <property type="match status" value="1"/>
</dbReference>
<dbReference type="FunFam" id="1.10.3500.10:FF:000002">
    <property type="entry name" value="RNA-binding transcriptional accessory protein"/>
    <property type="match status" value="1"/>
</dbReference>
<dbReference type="FunFam" id="2.40.50.140:FF:000051">
    <property type="entry name" value="RNA-binding transcriptional accessory protein"/>
    <property type="match status" value="1"/>
</dbReference>
<dbReference type="FunFam" id="3.30.420.140:FF:000001">
    <property type="entry name" value="RNA-binding transcriptional accessory protein"/>
    <property type="match status" value="1"/>
</dbReference>
<dbReference type="FunFam" id="1.10.10.650:FF:000001">
    <property type="entry name" value="S1 RNA-binding domain 1"/>
    <property type="match status" value="1"/>
</dbReference>
<dbReference type="Gene3D" id="2.40.50.140">
    <property type="entry name" value="Nucleic acid-binding proteins"/>
    <property type="match status" value="1"/>
</dbReference>
<dbReference type="Gene3D" id="1.10.10.650">
    <property type="entry name" value="RuvA domain 2-like"/>
    <property type="match status" value="1"/>
</dbReference>
<dbReference type="Gene3D" id="1.10.3500.10">
    <property type="entry name" value="Tex N-terminal region-like"/>
    <property type="match status" value="1"/>
</dbReference>
<dbReference type="Gene3D" id="1.10.150.310">
    <property type="entry name" value="Tex RuvX-like domain-like"/>
    <property type="match status" value="1"/>
</dbReference>
<dbReference type="Gene3D" id="3.30.420.140">
    <property type="entry name" value="YqgF/RNase H-like domain"/>
    <property type="match status" value="1"/>
</dbReference>
<dbReference type="InterPro" id="IPR041692">
    <property type="entry name" value="HHH_9"/>
</dbReference>
<dbReference type="InterPro" id="IPR012340">
    <property type="entry name" value="NA-bd_OB-fold"/>
</dbReference>
<dbReference type="InterPro" id="IPR050437">
    <property type="entry name" value="Ribos_protein_bS1-like"/>
</dbReference>
<dbReference type="InterPro" id="IPR012337">
    <property type="entry name" value="RNaseH-like_sf"/>
</dbReference>
<dbReference type="InterPro" id="IPR010994">
    <property type="entry name" value="RuvA_2-like"/>
</dbReference>
<dbReference type="InterPro" id="IPR003029">
    <property type="entry name" value="S1_domain"/>
</dbReference>
<dbReference type="InterPro" id="IPR044146">
    <property type="entry name" value="S1_Tex"/>
</dbReference>
<dbReference type="InterPro" id="IPR055179">
    <property type="entry name" value="Tex-like_central_region"/>
</dbReference>
<dbReference type="InterPro" id="IPR023323">
    <property type="entry name" value="Tex-like_dom_sf"/>
</dbReference>
<dbReference type="InterPro" id="IPR023319">
    <property type="entry name" value="Tex-like_HTH_dom_sf"/>
</dbReference>
<dbReference type="InterPro" id="IPR018974">
    <property type="entry name" value="Tex-like_N"/>
</dbReference>
<dbReference type="InterPro" id="IPR032639">
    <property type="entry name" value="Tex_YqgF"/>
</dbReference>
<dbReference type="InterPro" id="IPR006641">
    <property type="entry name" value="YqgF/RNaseH-like_dom"/>
</dbReference>
<dbReference type="InterPro" id="IPR037027">
    <property type="entry name" value="YqgF/RNaseH-like_dom_sf"/>
</dbReference>
<dbReference type="PANTHER" id="PTHR10724">
    <property type="entry name" value="30S RIBOSOMAL PROTEIN S1"/>
    <property type="match status" value="1"/>
</dbReference>
<dbReference type="PANTHER" id="PTHR10724:SF10">
    <property type="entry name" value="S1 RNA-BINDING DOMAIN-CONTAINING PROTEIN 1"/>
    <property type="match status" value="1"/>
</dbReference>
<dbReference type="Pfam" id="PF12836">
    <property type="entry name" value="HHH_3"/>
    <property type="match status" value="1"/>
</dbReference>
<dbReference type="Pfam" id="PF17674">
    <property type="entry name" value="HHH_9"/>
    <property type="match status" value="1"/>
</dbReference>
<dbReference type="Pfam" id="PF00575">
    <property type="entry name" value="S1"/>
    <property type="match status" value="1"/>
</dbReference>
<dbReference type="Pfam" id="PF22706">
    <property type="entry name" value="Tex_central_region"/>
    <property type="match status" value="1"/>
</dbReference>
<dbReference type="Pfam" id="PF09371">
    <property type="entry name" value="Tex_N"/>
    <property type="match status" value="1"/>
</dbReference>
<dbReference type="Pfam" id="PF16921">
    <property type="entry name" value="Tex_YqgF"/>
    <property type="match status" value="1"/>
</dbReference>
<dbReference type="SMART" id="SM00316">
    <property type="entry name" value="S1"/>
    <property type="match status" value="1"/>
</dbReference>
<dbReference type="SMART" id="SM00732">
    <property type="entry name" value="YqgFc"/>
    <property type="match status" value="1"/>
</dbReference>
<dbReference type="SUPFAM" id="SSF50249">
    <property type="entry name" value="Nucleic acid-binding proteins"/>
    <property type="match status" value="1"/>
</dbReference>
<dbReference type="SUPFAM" id="SSF53098">
    <property type="entry name" value="Ribonuclease H-like"/>
    <property type="match status" value="1"/>
</dbReference>
<dbReference type="SUPFAM" id="SSF47781">
    <property type="entry name" value="RuvA domain 2-like"/>
    <property type="match status" value="2"/>
</dbReference>
<dbReference type="SUPFAM" id="SSF158832">
    <property type="entry name" value="Tex N-terminal region-like"/>
    <property type="match status" value="1"/>
</dbReference>
<dbReference type="PROSITE" id="PS50126">
    <property type="entry name" value="S1"/>
    <property type="match status" value="1"/>
</dbReference>